<evidence type="ECO:0000305" key="1"/>
<evidence type="ECO:0007829" key="2">
    <source>
        <dbReference type="PDB" id="2BK0"/>
    </source>
</evidence>
<sequence>MGVQTHVLELTSSVSAEKIFQGFVIDVDTVLPKAAPGAYKSVEIKGDGGPGTLKIITLPDGGPITTMTLRIDGVNKEALTFDYSVIDGDILLGFIESIENHVVLVPTADGGSICKTTAIFHTKGDAVVPEENIKYANEQNTALFKALEAYLIAN</sequence>
<comment type="allergen">
    <text>Causes an allergic reaction in human.</text>
</comment>
<comment type="similarity">
    <text evidence="1">Belongs to the BetVI family.</text>
</comment>
<feature type="chain" id="PRO_0000154172" description="Major allergen Api g 1, isoallergen 1">
    <location>
        <begin position="1"/>
        <end position="154"/>
    </location>
</feature>
<feature type="strand" evidence="2">
    <location>
        <begin position="3"/>
        <end position="14"/>
    </location>
</feature>
<feature type="helix" evidence="2">
    <location>
        <begin position="16"/>
        <end position="23"/>
    </location>
</feature>
<feature type="helix" evidence="2">
    <location>
        <begin position="27"/>
        <end position="34"/>
    </location>
</feature>
<feature type="helix" evidence="2">
    <location>
        <begin position="36"/>
        <end position="38"/>
    </location>
</feature>
<feature type="strand" evidence="2">
    <location>
        <begin position="40"/>
        <end position="49"/>
    </location>
</feature>
<feature type="strand" evidence="2">
    <location>
        <begin position="53"/>
        <end position="57"/>
    </location>
</feature>
<feature type="strand" evidence="2">
    <location>
        <begin position="66"/>
        <end position="75"/>
    </location>
</feature>
<feature type="turn" evidence="2">
    <location>
        <begin position="76"/>
        <end position="79"/>
    </location>
</feature>
<feature type="strand" evidence="2">
    <location>
        <begin position="80"/>
        <end position="88"/>
    </location>
</feature>
<feature type="helix" evidence="2">
    <location>
        <begin position="89"/>
        <end position="91"/>
    </location>
</feature>
<feature type="turn" evidence="2">
    <location>
        <begin position="92"/>
        <end position="94"/>
    </location>
</feature>
<feature type="strand" evidence="2">
    <location>
        <begin position="95"/>
        <end position="106"/>
    </location>
</feature>
<feature type="strand" evidence="2">
    <location>
        <begin position="112"/>
        <end position="123"/>
    </location>
</feature>
<feature type="helix" evidence="2">
    <location>
        <begin position="130"/>
        <end position="153"/>
    </location>
</feature>
<reference key="1">
    <citation type="journal article" date="1995" name="Eur. J. Biochem.">
        <title>Molecular characterization of Api g 1, the major allergen of celery (Apium graveolens), and its immunological and structural relationships to a group of 17-kDa tree pollen allergens.</title>
        <authorList>
            <person name="Breiteneder H."/>
            <person name="Hoffmann-Sommergruber K."/>
            <person name="O'Riordain G."/>
            <person name="Susani M."/>
            <person name="Ahorn H."/>
            <person name="Ebner C."/>
            <person name="Kraft D."/>
            <person name="Scheiner O."/>
        </authorList>
    </citation>
    <scope>NUCLEOTIDE SEQUENCE [MRNA]</scope>
    <source>
        <tissue>Bulb</tissue>
        <tissue>Leaf</tissue>
    </source>
</reference>
<reference key="2">
    <citation type="journal article" date="2005" name="J. Mol. Biol.">
        <title>Crystal structure of the major celery allergen Api g 1: molecular analysis of cross-reactivity.</title>
        <authorList>
            <person name="Schirmer T."/>
            <person name="Hoffimann-Sommergrube K."/>
            <person name="Susani M."/>
            <person name="Breiteneder H."/>
            <person name="Markovic-Housley Z."/>
        </authorList>
    </citation>
    <scope>X-RAY CRYSTALLOGRAPHY (2.9 ANGSTROMS)</scope>
</reference>
<organism>
    <name type="scientific">Apium graveolens</name>
    <name type="common">Celery</name>
    <dbReference type="NCBI Taxonomy" id="4045"/>
    <lineage>
        <taxon>Eukaryota</taxon>
        <taxon>Viridiplantae</taxon>
        <taxon>Streptophyta</taxon>
        <taxon>Embryophyta</taxon>
        <taxon>Tracheophyta</taxon>
        <taxon>Spermatophyta</taxon>
        <taxon>Magnoliopsida</taxon>
        <taxon>eudicotyledons</taxon>
        <taxon>Gunneridae</taxon>
        <taxon>Pentapetalae</taxon>
        <taxon>asterids</taxon>
        <taxon>campanulids</taxon>
        <taxon>Apiales</taxon>
        <taxon>Apiaceae</taxon>
        <taxon>Apioideae</taxon>
        <taxon>apioid superclade</taxon>
        <taxon>Apieae</taxon>
        <taxon>Apium</taxon>
    </lineage>
</organism>
<dbReference type="EMBL" id="Z48967">
    <property type="protein sequence ID" value="CAA88831.1"/>
    <property type="molecule type" value="mRNA"/>
</dbReference>
<dbReference type="PIR" id="S63984">
    <property type="entry name" value="S63984"/>
</dbReference>
<dbReference type="PDB" id="2BK0">
    <property type="method" value="X-ray"/>
    <property type="resolution" value="2.90 A"/>
    <property type="chains" value="A/B=1-154"/>
</dbReference>
<dbReference type="PDBsum" id="2BK0"/>
<dbReference type="SMR" id="P49372"/>
<dbReference type="Allergome" id="40">
    <property type="allergen name" value="Api g 1"/>
</dbReference>
<dbReference type="Allergome" id="41">
    <property type="allergen name" value="Api g 1.0101"/>
</dbReference>
<dbReference type="EvolutionaryTrace" id="P49372"/>
<dbReference type="GO" id="GO:0005737">
    <property type="term" value="C:cytoplasm"/>
    <property type="evidence" value="ECO:0007669"/>
    <property type="project" value="TreeGrafter"/>
</dbReference>
<dbReference type="GO" id="GO:0005634">
    <property type="term" value="C:nucleus"/>
    <property type="evidence" value="ECO:0007669"/>
    <property type="project" value="TreeGrafter"/>
</dbReference>
<dbReference type="GO" id="GO:0010427">
    <property type="term" value="F:abscisic acid binding"/>
    <property type="evidence" value="ECO:0007669"/>
    <property type="project" value="InterPro"/>
</dbReference>
<dbReference type="GO" id="GO:0004864">
    <property type="term" value="F:protein phosphatase inhibitor activity"/>
    <property type="evidence" value="ECO:0007669"/>
    <property type="project" value="InterPro"/>
</dbReference>
<dbReference type="GO" id="GO:0038023">
    <property type="term" value="F:signaling receptor activity"/>
    <property type="evidence" value="ECO:0007669"/>
    <property type="project" value="InterPro"/>
</dbReference>
<dbReference type="GO" id="GO:0009738">
    <property type="term" value="P:abscisic acid-activated signaling pathway"/>
    <property type="evidence" value="ECO:0007669"/>
    <property type="project" value="InterPro"/>
</dbReference>
<dbReference type="GO" id="GO:0006952">
    <property type="term" value="P:defense response"/>
    <property type="evidence" value="ECO:0007669"/>
    <property type="project" value="UniProtKB-KW"/>
</dbReference>
<dbReference type="CDD" id="cd07816">
    <property type="entry name" value="Bet_v1-like"/>
    <property type="match status" value="1"/>
</dbReference>
<dbReference type="FunFam" id="3.30.530.20:FF:000007">
    <property type="entry name" value="Major pollen allergen Bet v 1-A"/>
    <property type="match status" value="1"/>
</dbReference>
<dbReference type="Gene3D" id="3.30.530.20">
    <property type="match status" value="1"/>
</dbReference>
<dbReference type="InterPro" id="IPR000916">
    <property type="entry name" value="Bet_v_I/MLP"/>
</dbReference>
<dbReference type="InterPro" id="IPR024949">
    <property type="entry name" value="Bet_v_I_allergen"/>
</dbReference>
<dbReference type="InterPro" id="IPR050279">
    <property type="entry name" value="Plant_def-hormone_signal"/>
</dbReference>
<dbReference type="InterPro" id="IPR023393">
    <property type="entry name" value="START-like_dom_sf"/>
</dbReference>
<dbReference type="PANTHER" id="PTHR31213">
    <property type="entry name" value="OS08G0374000 PROTEIN-RELATED"/>
    <property type="match status" value="1"/>
</dbReference>
<dbReference type="PANTHER" id="PTHR31213:SF55">
    <property type="entry name" value="STRESS-INDUCED PROTEIN SAM22"/>
    <property type="match status" value="1"/>
</dbReference>
<dbReference type="Pfam" id="PF00407">
    <property type="entry name" value="Bet_v_1"/>
    <property type="match status" value="1"/>
</dbReference>
<dbReference type="PRINTS" id="PR00634">
    <property type="entry name" value="BETALLERGEN"/>
</dbReference>
<dbReference type="SMART" id="SM01037">
    <property type="entry name" value="Bet_v_1"/>
    <property type="match status" value="1"/>
</dbReference>
<dbReference type="SUPFAM" id="SSF55961">
    <property type="entry name" value="Bet v1-like"/>
    <property type="match status" value="1"/>
</dbReference>
<dbReference type="PROSITE" id="PS00451">
    <property type="entry name" value="PATHOGENESIS_BETVI"/>
    <property type="match status" value="1"/>
</dbReference>
<protein>
    <recommendedName>
        <fullName>Major allergen Api g 1, isoallergen 1</fullName>
    </recommendedName>
    <alternativeName>
        <fullName>Allergen Api g 1.0101</fullName>
    </alternativeName>
    <alternativeName>
        <fullName>Allergen Api g I</fullName>
    </alternativeName>
    <allergenName>Api g 1</allergenName>
</protein>
<keyword id="KW-0002">3D-structure</keyword>
<keyword id="KW-0020">Allergen</keyword>
<keyword id="KW-0568">Pathogenesis-related protein</keyword>
<keyword id="KW-0611">Plant defense</keyword>
<proteinExistence type="evidence at protein level"/>
<name>ALL1_APIGR</name>
<accession>P49372</accession>